<accession>Q2J0E6</accession>
<organism>
    <name type="scientific">Rhodopseudomonas palustris (strain HaA2)</name>
    <dbReference type="NCBI Taxonomy" id="316058"/>
    <lineage>
        <taxon>Bacteria</taxon>
        <taxon>Pseudomonadati</taxon>
        <taxon>Pseudomonadota</taxon>
        <taxon>Alphaproteobacteria</taxon>
        <taxon>Hyphomicrobiales</taxon>
        <taxon>Nitrobacteraceae</taxon>
        <taxon>Rhodopseudomonas</taxon>
    </lineage>
</organism>
<proteinExistence type="inferred from homology"/>
<name>NUOI1_RHOP2</name>
<feature type="chain" id="PRO_0000250940" description="NADH-quinone oxidoreductase subunit I 1">
    <location>
        <begin position="1"/>
        <end position="171"/>
    </location>
</feature>
<feature type="domain" description="4Fe-4S ferredoxin-type 1" evidence="1">
    <location>
        <begin position="39"/>
        <end position="71"/>
    </location>
</feature>
<feature type="domain" description="4Fe-4S ferredoxin-type 2" evidence="1">
    <location>
        <begin position="81"/>
        <end position="110"/>
    </location>
</feature>
<feature type="binding site" evidence="1">
    <location>
        <position position="51"/>
    </location>
    <ligand>
        <name>[4Fe-4S] cluster</name>
        <dbReference type="ChEBI" id="CHEBI:49883"/>
        <label>1</label>
    </ligand>
</feature>
<feature type="binding site" evidence="1">
    <location>
        <position position="54"/>
    </location>
    <ligand>
        <name>[4Fe-4S] cluster</name>
        <dbReference type="ChEBI" id="CHEBI:49883"/>
        <label>1</label>
    </ligand>
</feature>
<feature type="binding site" evidence="1">
    <location>
        <position position="57"/>
    </location>
    <ligand>
        <name>[4Fe-4S] cluster</name>
        <dbReference type="ChEBI" id="CHEBI:49883"/>
        <label>1</label>
    </ligand>
</feature>
<feature type="binding site" evidence="1">
    <location>
        <position position="61"/>
    </location>
    <ligand>
        <name>[4Fe-4S] cluster</name>
        <dbReference type="ChEBI" id="CHEBI:49883"/>
        <label>2</label>
    </ligand>
</feature>
<feature type="binding site" evidence="1">
    <location>
        <position position="90"/>
    </location>
    <ligand>
        <name>[4Fe-4S] cluster</name>
        <dbReference type="ChEBI" id="CHEBI:49883"/>
        <label>2</label>
    </ligand>
</feature>
<feature type="binding site" evidence="1">
    <location>
        <position position="93"/>
    </location>
    <ligand>
        <name>[4Fe-4S] cluster</name>
        <dbReference type="ChEBI" id="CHEBI:49883"/>
        <label>2</label>
    </ligand>
</feature>
<feature type="binding site" evidence="1">
    <location>
        <position position="96"/>
    </location>
    <ligand>
        <name>[4Fe-4S] cluster</name>
        <dbReference type="ChEBI" id="CHEBI:49883"/>
        <label>2</label>
    </ligand>
</feature>
<feature type="binding site" evidence="1">
    <location>
        <position position="100"/>
    </location>
    <ligand>
        <name>[4Fe-4S] cluster</name>
        <dbReference type="ChEBI" id="CHEBI:49883"/>
        <label>1</label>
    </ligand>
</feature>
<dbReference type="EC" id="7.1.1.-" evidence="1"/>
<dbReference type="EMBL" id="CP000250">
    <property type="protein sequence ID" value="ABD06064.1"/>
    <property type="molecule type" value="Genomic_DNA"/>
</dbReference>
<dbReference type="RefSeq" id="WP_011440252.1">
    <property type="nucleotide sequence ID" value="NC_007778.1"/>
</dbReference>
<dbReference type="SMR" id="Q2J0E6"/>
<dbReference type="STRING" id="316058.RPB_1354"/>
<dbReference type="KEGG" id="rpb:RPB_1354"/>
<dbReference type="eggNOG" id="COG1143">
    <property type="taxonomic scope" value="Bacteria"/>
</dbReference>
<dbReference type="HOGENOM" id="CLU_067218_4_3_5"/>
<dbReference type="OrthoDB" id="9808559at2"/>
<dbReference type="Proteomes" id="UP000008809">
    <property type="component" value="Chromosome"/>
</dbReference>
<dbReference type="GO" id="GO:0005886">
    <property type="term" value="C:plasma membrane"/>
    <property type="evidence" value="ECO:0007669"/>
    <property type="project" value="UniProtKB-SubCell"/>
</dbReference>
<dbReference type="GO" id="GO:0051539">
    <property type="term" value="F:4 iron, 4 sulfur cluster binding"/>
    <property type="evidence" value="ECO:0007669"/>
    <property type="project" value="UniProtKB-KW"/>
</dbReference>
<dbReference type="GO" id="GO:0005506">
    <property type="term" value="F:iron ion binding"/>
    <property type="evidence" value="ECO:0007669"/>
    <property type="project" value="UniProtKB-UniRule"/>
</dbReference>
<dbReference type="GO" id="GO:0050136">
    <property type="term" value="F:NADH:ubiquinone reductase (non-electrogenic) activity"/>
    <property type="evidence" value="ECO:0007669"/>
    <property type="project" value="UniProtKB-UniRule"/>
</dbReference>
<dbReference type="GO" id="GO:0048038">
    <property type="term" value="F:quinone binding"/>
    <property type="evidence" value="ECO:0007669"/>
    <property type="project" value="UniProtKB-KW"/>
</dbReference>
<dbReference type="GO" id="GO:0009060">
    <property type="term" value="P:aerobic respiration"/>
    <property type="evidence" value="ECO:0007669"/>
    <property type="project" value="TreeGrafter"/>
</dbReference>
<dbReference type="FunFam" id="3.30.70.3270:FF:000002">
    <property type="entry name" value="NADH-quinone oxidoreductase subunit I"/>
    <property type="match status" value="1"/>
</dbReference>
<dbReference type="Gene3D" id="3.30.70.3270">
    <property type="match status" value="1"/>
</dbReference>
<dbReference type="HAMAP" id="MF_01351">
    <property type="entry name" value="NDH1_NuoI"/>
    <property type="match status" value="1"/>
</dbReference>
<dbReference type="InterPro" id="IPR017896">
    <property type="entry name" value="4Fe4S_Fe-S-bd"/>
</dbReference>
<dbReference type="InterPro" id="IPR017900">
    <property type="entry name" value="4Fe4S_Fe_S_CS"/>
</dbReference>
<dbReference type="InterPro" id="IPR010226">
    <property type="entry name" value="NADH_quinone_OxRdtase_chainI"/>
</dbReference>
<dbReference type="NCBIfam" id="TIGR01971">
    <property type="entry name" value="NuoI"/>
    <property type="match status" value="1"/>
</dbReference>
<dbReference type="NCBIfam" id="NF004536">
    <property type="entry name" value="PRK05888.1-1"/>
    <property type="match status" value="1"/>
</dbReference>
<dbReference type="PANTHER" id="PTHR10849:SF20">
    <property type="entry name" value="NADH DEHYDROGENASE [UBIQUINONE] IRON-SULFUR PROTEIN 8, MITOCHONDRIAL"/>
    <property type="match status" value="1"/>
</dbReference>
<dbReference type="PANTHER" id="PTHR10849">
    <property type="entry name" value="NADH DEHYDROGENASE UBIQUINONE IRON-SULFUR PROTEIN 8, MITOCHONDRIAL"/>
    <property type="match status" value="1"/>
</dbReference>
<dbReference type="Pfam" id="PF12838">
    <property type="entry name" value="Fer4_7"/>
    <property type="match status" value="1"/>
</dbReference>
<dbReference type="SUPFAM" id="SSF54862">
    <property type="entry name" value="4Fe-4S ferredoxins"/>
    <property type="match status" value="1"/>
</dbReference>
<dbReference type="PROSITE" id="PS00198">
    <property type="entry name" value="4FE4S_FER_1"/>
    <property type="match status" value="2"/>
</dbReference>
<dbReference type="PROSITE" id="PS51379">
    <property type="entry name" value="4FE4S_FER_2"/>
    <property type="match status" value="2"/>
</dbReference>
<comment type="function">
    <text evidence="1">NDH-1 shuttles electrons from NADH, via FMN and iron-sulfur (Fe-S) centers, to quinones in the respiratory chain. The immediate electron acceptor for the enzyme in this species is believed to be ubiquinone. Couples the redox reaction to proton translocation (for every two electrons transferred, four hydrogen ions are translocated across the cytoplasmic membrane), and thus conserves the redox energy in a proton gradient.</text>
</comment>
<comment type="catalytic activity">
    <reaction evidence="1">
        <text>a quinone + NADH + 5 H(+)(in) = a quinol + NAD(+) + 4 H(+)(out)</text>
        <dbReference type="Rhea" id="RHEA:57888"/>
        <dbReference type="ChEBI" id="CHEBI:15378"/>
        <dbReference type="ChEBI" id="CHEBI:24646"/>
        <dbReference type="ChEBI" id="CHEBI:57540"/>
        <dbReference type="ChEBI" id="CHEBI:57945"/>
        <dbReference type="ChEBI" id="CHEBI:132124"/>
    </reaction>
</comment>
<comment type="cofactor">
    <cofactor evidence="1">
        <name>[4Fe-4S] cluster</name>
        <dbReference type="ChEBI" id="CHEBI:49883"/>
    </cofactor>
    <text evidence="1">Binds 2 [4Fe-4S] clusters per subunit.</text>
</comment>
<comment type="subunit">
    <text evidence="1">NDH-1 is composed of 14 different subunits. Subunits NuoA, H, J, K, L, M, N constitute the membrane sector of the complex.</text>
</comment>
<comment type="subcellular location">
    <subcellularLocation>
        <location evidence="1">Cell inner membrane</location>
        <topology evidence="1">Peripheral membrane protein</topology>
    </subcellularLocation>
</comment>
<comment type="similarity">
    <text evidence="1">Belongs to the complex I 23 kDa subunit family.</text>
</comment>
<evidence type="ECO:0000255" key="1">
    <source>
        <dbReference type="HAMAP-Rule" id="MF_01351"/>
    </source>
</evidence>
<gene>
    <name evidence="1" type="primary">nuoI1</name>
    <name type="ordered locus">RPB_1354</name>
</gene>
<keyword id="KW-0004">4Fe-4S</keyword>
<keyword id="KW-0997">Cell inner membrane</keyword>
<keyword id="KW-1003">Cell membrane</keyword>
<keyword id="KW-0408">Iron</keyword>
<keyword id="KW-0411">Iron-sulfur</keyword>
<keyword id="KW-0472">Membrane</keyword>
<keyword id="KW-0479">Metal-binding</keyword>
<keyword id="KW-0520">NAD</keyword>
<keyword id="KW-0874">Quinone</keyword>
<keyword id="KW-1185">Reference proteome</keyword>
<keyword id="KW-0677">Repeat</keyword>
<keyword id="KW-1278">Translocase</keyword>
<keyword id="KW-0830">Ubiquinone</keyword>
<sequence length="171" mass="19194">MIGWLEAMLRVGRKLFVKAETQLYPEEKPKLFPRSRGRIVLTRDPDGQERCVACNLCAAVCPVGCIDLSKAVADDGRWYPEHFRINFARCIFCGFCEEACPTAAIQLTPDFELGEWRRDALVYEKHDLLIAGEGKVRGYRYWSVAGKAIDGKDKGCAENESPPVDLKGLLP</sequence>
<protein>
    <recommendedName>
        <fullName evidence="1">NADH-quinone oxidoreductase subunit I 1</fullName>
        <ecNumber evidence="1">7.1.1.-</ecNumber>
    </recommendedName>
    <alternativeName>
        <fullName evidence="1">NADH dehydrogenase I subunit I 1</fullName>
    </alternativeName>
    <alternativeName>
        <fullName evidence="1">NDH-1 subunit I 1</fullName>
    </alternativeName>
</protein>
<reference key="1">
    <citation type="submission" date="2006-01" db="EMBL/GenBank/DDBJ databases">
        <title>Complete sequence of Rhodopseudomonas palustris HaA2.</title>
        <authorList>
            <consortium name="US DOE Joint Genome Institute"/>
            <person name="Copeland A."/>
            <person name="Lucas S."/>
            <person name="Lapidus A."/>
            <person name="Barry K."/>
            <person name="Detter J.C."/>
            <person name="Glavina T."/>
            <person name="Hammon N."/>
            <person name="Israni S."/>
            <person name="Pitluck S."/>
            <person name="Chain P."/>
            <person name="Malfatti S."/>
            <person name="Shin M."/>
            <person name="Vergez L."/>
            <person name="Schmutz J."/>
            <person name="Larimer F."/>
            <person name="Land M."/>
            <person name="Hauser L."/>
            <person name="Pelletier D.A."/>
            <person name="Kyrpides N."/>
            <person name="Anderson I."/>
            <person name="Oda Y."/>
            <person name="Harwood C.S."/>
            <person name="Richardson P."/>
        </authorList>
    </citation>
    <scope>NUCLEOTIDE SEQUENCE [LARGE SCALE GENOMIC DNA]</scope>
    <source>
        <strain>HaA2</strain>
    </source>
</reference>